<organism>
    <name type="scientific">Escherichia coli</name>
    <dbReference type="NCBI Taxonomy" id="562"/>
    <lineage>
        <taxon>Bacteria</taxon>
        <taxon>Pseudomonadati</taxon>
        <taxon>Pseudomonadota</taxon>
        <taxon>Gammaproteobacteria</taxon>
        <taxon>Enterobacterales</taxon>
        <taxon>Enterobacteriaceae</taxon>
        <taxon>Escherichia</taxon>
    </lineage>
</organism>
<gene>
    <name type="primary">papA</name>
</gene>
<feature type="signal peptide">
    <location>
        <begin position="1"/>
        <end position="22"/>
    </location>
</feature>
<feature type="chain" id="PRO_0000009197" description="Pap fimbrial major pilin protein">
    <location>
        <begin position="23"/>
        <end position="185"/>
    </location>
</feature>
<feature type="disulfide bond" evidence="1">
    <location>
        <begin position="44"/>
        <end position="83"/>
    </location>
</feature>
<feature type="strand" evidence="3">
    <location>
        <begin position="33"/>
        <end position="40"/>
    </location>
</feature>
<feature type="strand" evidence="3">
    <location>
        <begin position="45"/>
        <end position="47"/>
    </location>
</feature>
<feature type="strand" evidence="3">
    <location>
        <begin position="54"/>
        <end position="56"/>
    </location>
</feature>
<feature type="helix" evidence="3">
    <location>
        <begin position="62"/>
        <end position="67"/>
    </location>
</feature>
<feature type="strand" evidence="3">
    <location>
        <begin position="74"/>
        <end position="83"/>
    </location>
</feature>
<feature type="strand" evidence="3">
    <location>
        <begin position="98"/>
        <end position="104"/>
    </location>
</feature>
<feature type="strand" evidence="3">
    <location>
        <begin position="111"/>
        <end position="116"/>
    </location>
</feature>
<feature type="strand" evidence="3">
    <location>
        <begin position="118"/>
        <end position="121"/>
    </location>
</feature>
<feature type="strand" evidence="3">
    <location>
        <begin position="123"/>
        <end position="128"/>
    </location>
</feature>
<feature type="strand" evidence="3">
    <location>
        <begin position="130"/>
        <end position="133"/>
    </location>
</feature>
<feature type="strand" evidence="3">
    <location>
        <begin position="137"/>
        <end position="140"/>
    </location>
</feature>
<feature type="strand" evidence="3">
    <location>
        <begin position="152"/>
        <end position="161"/>
    </location>
</feature>
<feature type="strand" evidence="3">
    <location>
        <begin position="175"/>
        <end position="184"/>
    </location>
</feature>
<reference key="1">
    <citation type="journal article" date="1984" name="J. Bacteriol.">
        <title>Nucleotide sequence of the papA gene encoding the Pap pilus subunit of human uropathogenic Escherichia coli.</title>
        <authorList>
            <person name="Baga M."/>
            <person name="Normark S."/>
            <person name="Hardy J."/>
            <person name="O'Hanley P."/>
            <person name="Lark D."/>
            <person name="Olsson O."/>
            <person name="Schoolnik G."/>
            <person name="Falkow S."/>
        </authorList>
    </citation>
    <scope>NUCLEOTIDE SEQUENCE [GENOMIC DNA]</scope>
    <source>
        <strain>ATCC 700336 / J96 / UPEC</strain>
    </source>
</reference>
<reference key="2">
    <citation type="journal article" date="1992" name="Mol. Microbiol.">
        <title>Horizontal gene transfer of the Escherichia coli pap and prs pili operons as a mechanism for the development of tissue-specific adhesive properties.</title>
        <authorList>
            <person name="Marklund B.-I."/>
            <person name="Tennent J.M."/>
            <person name="Garcia E."/>
            <person name="Hamers A."/>
            <person name="Baga M."/>
            <person name="Lindberg F."/>
            <person name="Gaastra W."/>
            <person name="Normark S."/>
        </authorList>
    </citation>
    <scope>NUCLEOTIDE SEQUENCE [GENOMIC DNA]</scope>
    <source>
        <strain>ATCC 700336 / J96 / UPEC</strain>
    </source>
</reference>
<reference key="3">
    <citation type="journal article" date="1998" name="J. Struct. Biol.">
        <title>Pilus biogenesis via the chaperone/usher pathway: an integration of structure and function.</title>
        <authorList>
            <person name="Hung D.L."/>
            <person name="Hultgren S.J."/>
        </authorList>
    </citation>
    <scope>REVIEW</scope>
</reference>
<reference key="4">
    <citation type="journal article" date="2007" name="PLoS Pathog.">
        <title>Crystal structure of the P pilus rod subunit PapA.</title>
        <authorList>
            <person name="Verger D."/>
            <person name="Bullitt E."/>
            <person name="Hultgren S.J."/>
            <person name="Waksman G."/>
        </authorList>
    </citation>
    <scope>X-RAY CRYSTALLOGRAPHY (2.5 ANGSTROMS) OF 23-185 IN COMPLEX WITH PAPD</scope>
    <scope>DISULFIDE BOND</scope>
</reference>
<dbReference type="EMBL" id="X03391">
    <property type="protein sequence ID" value="CAA27126.1"/>
    <property type="molecule type" value="Genomic_DNA"/>
</dbReference>
<dbReference type="EMBL" id="X61239">
    <property type="protein sequence ID" value="CAA43562.1"/>
    <property type="molecule type" value="Genomic_DNA"/>
</dbReference>
<dbReference type="PIR" id="A23221">
    <property type="entry name" value="YQECPP"/>
</dbReference>
<dbReference type="PDB" id="2UY6">
    <property type="method" value="X-ray"/>
    <property type="resolution" value="2.50 A"/>
    <property type="chains" value="B/C=23-185"/>
</dbReference>
<dbReference type="PDB" id="2UY7">
    <property type="method" value="X-ray"/>
    <property type="resolution" value="2.60 A"/>
    <property type="chains" value="B/D/F/H=23-185"/>
</dbReference>
<dbReference type="PDB" id="5FLU">
    <property type="method" value="EM"/>
    <property type="resolution" value="3.80 A"/>
    <property type="chains" value="A/B/C/D/E/F/G/H/I/J/K/L/M=23-185"/>
</dbReference>
<dbReference type="PDBsum" id="2UY6"/>
<dbReference type="PDBsum" id="2UY7"/>
<dbReference type="PDBsum" id="5FLU"/>
<dbReference type="SMR" id="P04127"/>
<dbReference type="DIP" id="DIP-44594N"/>
<dbReference type="IntAct" id="P04127">
    <property type="interactions" value="4"/>
</dbReference>
<dbReference type="MINT" id="P04127"/>
<dbReference type="EvolutionaryTrace" id="P04127"/>
<dbReference type="GO" id="GO:0005576">
    <property type="term" value="C:extracellular region"/>
    <property type="evidence" value="ECO:0007669"/>
    <property type="project" value="UniProtKB-SubCell"/>
</dbReference>
<dbReference type="GO" id="GO:0009289">
    <property type="term" value="C:pilus"/>
    <property type="evidence" value="ECO:0007669"/>
    <property type="project" value="UniProtKB-SubCell"/>
</dbReference>
<dbReference type="GO" id="GO:0043709">
    <property type="term" value="P:cell adhesion involved in single-species biofilm formation"/>
    <property type="evidence" value="ECO:0007669"/>
    <property type="project" value="TreeGrafter"/>
</dbReference>
<dbReference type="Gene3D" id="2.60.40.1090">
    <property type="entry name" value="Fimbrial-type adhesion domain"/>
    <property type="match status" value="1"/>
</dbReference>
<dbReference type="InterPro" id="IPR000259">
    <property type="entry name" value="Adhesion_dom_fimbrial"/>
</dbReference>
<dbReference type="InterPro" id="IPR036937">
    <property type="entry name" value="Adhesion_dom_fimbrial_sf"/>
</dbReference>
<dbReference type="InterPro" id="IPR008966">
    <property type="entry name" value="Adhesion_dom_sf"/>
</dbReference>
<dbReference type="InterPro" id="IPR050263">
    <property type="entry name" value="Bact_Fimbrial_Adh_Pro"/>
</dbReference>
<dbReference type="PANTHER" id="PTHR33420:SF3">
    <property type="entry name" value="FIMBRIAL SUBUNIT ELFA"/>
    <property type="match status" value="1"/>
</dbReference>
<dbReference type="PANTHER" id="PTHR33420">
    <property type="entry name" value="FIMBRIAL SUBUNIT ELFA-RELATED"/>
    <property type="match status" value="1"/>
</dbReference>
<dbReference type="Pfam" id="PF00419">
    <property type="entry name" value="Fimbrial"/>
    <property type="match status" value="1"/>
</dbReference>
<dbReference type="SUPFAM" id="SSF49401">
    <property type="entry name" value="Bacterial adhesins"/>
    <property type="match status" value="1"/>
</dbReference>
<accession>P04127</accession>
<name>PAPA_ECOLX</name>
<keyword id="KW-0002">3D-structure</keyword>
<keyword id="KW-1015">Disulfide bond</keyword>
<keyword id="KW-0281">Fimbrium</keyword>
<keyword id="KW-0964">Secreted</keyword>
<keyword id="KW-0732">Signal</keyword>
<evidence type="ECO:0000269" key="1">
    <source>
    </source>
</evidence>
<evidence type="ECO:0000305" key="2"/>
<evidence type="ECO:0007829" key="3">
    <source>
        <dbReference type="PDB" id="2UY6"/>
    </source>
</evidence>
<comment type="function">
    <text>Polymerizes to form the thick (6.8 nm in diameter) rod of the pilus (also called fimbria). The rod is a right-handed helical cylinder with 3.28 PapA subunits per turn. Pili are polar filaments radiating from the surface of the bacterium to a length of 0.5-1.5 micrometers and numbering 100-300 per cell, and enable bacteria to colonize the epithelium of specific host organs.</text>
</comment>
<comment type="subcellular location">
    <subcellularLocation>
        <location>Secreted</location>
    </subcellularLocation>
    <subcellularLocation>
        <location>Fimbrium</location>
    </subcellularLocation>
</comment>
<comment type="miscellaneous">
    <text>Strains of E.coli that cause infection of the human urinary tract produce pap-pili which are hair-like appendages consisting of about 1000 helically arranged subunits of the protein PapA. These pili mediate binding to digalactoside-containing glycolipids present on the epithelial cells which line the urinary tract.</text>
</comment>
<comment type="similarity">
    <text evidence="2">Belongs to the fimbrial protein family.</text>
</comment>
<protein>
    <recommendedName>
        <fullName>Pap fimbrial major pilin protein</fullName>
        <shortName>Pap pili</shortName>
    </recommendedName>
</protein>
<proteinExistence type="evidence at protein level"/>
<sequence length="185" mass="18686">MIKSVIAGAVAMAVVSFGVNNAAPTIPQGQGKVTFNGTVVDAPCSISQKSADQSIDFGQLSKSFLEAGGVSKPMDLDIELVNCDITAFKGGNGAKKGTVKLAFTGPIVNGHSDELDTNGGTGTAIVVQGAGKNVVFDGSEGDANTLKDGENVLHYTAVVKKSSAVGAAVTEGAFSAVANFNLTYQ</sequence>